<accession>Q24QL6</accession>
<protein>
    <recommendedName>
        <fullName evidence="1">Aspartyl/glutamyl-tRNA(Asn/Gln) amidotransferase subunit C</fullName>
        <shortName evidence="1">Asp/Glu-ADT subunit C</shortName>
        <ecNumber evidence="1">6.3.5.-</ecNumber>
    </recommendedName>
</protein>
<reference key="1">
    <citation type="journal article" date="2006" name="J. Bacteriol.">
        <title>Complete genome sequence of the dehalorespiring bacterium Desulfitobacterium hafniense Y51 and comparison with Dehalococcoides ethenogenes 195.</title>
        <authorList>
            <person name="Nonaka H."/>
            <person name="Keresztes G."/>
            <person name="Shinoda Y."/>
            <person name="Ikenaga Y."/>
            <person name="Abe M."/>
            <person name="Naito K."/>
            <person name="Inatomi K."/>
            <person name="Furukawa K."/>
            <person name="Inui M."/>
            <person name="Yukawa H."/>
        </authorList>
    </citation>
    <scope>NUCLEOTIDE SEQUENCE [LARGE SCALE GENOMIC DNA]</scope>
    <source>
        <strain>Y51</strain>
    </source>
</reference>
<proteinExistence type="inferred from homology"/>
<organism>
    <name type="scientific">Desulfitobacterium hafniense (strain Y51)</name>
    <dbReference type="NCBI Taxonomy" id="138119"/>
    <lineage>
        <taxon>Bacteria</taxon>
        <taxon>Bacillati</taxon>
        <taxon>Bacillota</taxon>
        <taxon>Clostridia</taxon>
        <taxon>Eubacteriales</taxon>
        <taxon>Desulfitobacteriaceae</taxon>
        <taxon>Desulfitobacterium</taxon>
    </lineage>
</organism>
<keyword id="KW-0067">ATP-binding</keyword>
<keyword id="KW-0436">Ligase</keyword>
<keyword id="KW-0547">Nucleotide-binding</keyword>
<keyword id="KW-0648">Protein biosynthesis</keyword>
<keyword id="KW-1185">Reference proteome</keyword>
<dbReference type="EC" id="6.3.5.-" evidence="1"/>
<dbReference type="EMBL" id="AP008230">
    <property type="protein sequence ID" value="BAE85676.1"/>
    <property type="molecule type" value="Genomic_DNA"/>
</dbReference>
<dbReference type="RefSeq" id="WP_011461445.1">
    <property type="nucleotide sequence ID" value="NC_007907.1"/>
</dbReference>
<dbReference type="SMR" id="Q24QL6"/>
<dbReference type="STRING" id="138119.DSY3887"/>
<dbReference type="KEGG" id="dsy:DSY3887"/>
<dbReference type="eggNOG" id="COG0721">
    <property type="taxonomic scope" value="Bacteria"/>
</dbReference>
<dbReference type="HOGENOM" id="CLU_105899_1_2_9"/>
<dbReference type="Proteomes" id="UP000001946">
    <property type="component" value="Chromosome"/>
</dbReference>
<dbReference type="GO" id="GO:0050566">
    <property type="term" value="F:asparaginyl-tRNA synthase (glutamine-hydrolyzing) activity"/>
    <property type="evidence" value="ECO:0007669"/>
    <property type="project" value="RHEA"/>
</dbReference>
<dbReference type="GO" id="GO:0005524">
    <property type="term" value="F:ATP binding"/>
    <property type="evidence" value="ECO:0007669"/>
    <property type="project" value="UniProtKB-KW"/>
</dbReference>
<dbReference type="GO" id="GO:0050567">
    <property type="term" value="F:glutaminyl-tRNA synthase (glutamine-hydrolyzing) activity"/>
    <property type="evidence" value="ECO:0007669"/>
    <property type="project" value="UniProtKB-UniRule"/>
</dbReference>
<dbReference type="GO" id="GO:0070681">
    <property type="term" value="P:glutaminyl-tRNAGln biosynthesis via transamidation"/>
    <property type="evidence" value="ECO:0007669"/>
    <property type="project" value="TreeGrafter"/>
</dbReference>
<dbReference type="GO" id="GO:0006450">
    <property type="term" value="P:regulation of translational fidelity"/>
    <property type="evidence" value="ECO:0007669"/>
    <property type="project" value="InterPro"/>
</dbReference>
<dbReference type="GO" id="GO:0006412">
    <property type="term" value="P:translation"/>
    <property type="evidence" value="ECO:0007669"/>
    <property type="project" value="UniProtKB-UniRule"/>
</dbReference>
<dbReference type="Gene3D" id="1.10.20.60">
    <property type="entry name" value="Glu-tRNAGln amidotransferase C subunit, N-terminal domain"/>
    <property type="match status" value="1"/>
</dbReference>
<dbReference type="HAMAP" id="MF_00122">
    <property type="entry name" value="GatC"/>
    <property type="match status" value="1"/>
</dbReference>
<dbReference type="InterPro" id="IPR036113">
    <property type="entry name" value="Asp/Glu-ADT_sf_sub_c"/>
</dbReference>
<dbReference type="InterPro" id="IPR003837">
    <property type="entry name" value="GatC"/>
</dbReference>
<dbReference type="NCBIfam" id="TIGR00135">
    <property type="entry name" value="gatC"/>
    <property type="match status" value="1"/>
</dbReference>
<dbReference type="PANTHER" id="PTHR15004">
    <property type="entry name" value="GLUTAMYL-TRNA(GLN) AMIDOTRANSFERASE SUBUNIT C, MITOCHONDRIAL"/>
    <property type="match status" value="1"/>
</dbReference>
<dbReference type="PANTHER" id="PTHR15004:SF0">
    <property type="entry name" value="GLUTAMYL-TRNA(GLN) AMIDOTRANSFERASE SUBUNIT C, MITOCHONDRIAL"/>
    <property type="match status" value="1"/>
</dbReference>
<dbReference type="Pfam" id="PF02686">
    <property type="entry name" value="GatC"/>
    <property type="match status" value="1"/>
</dbReference>
<dbReference type="SUPFAM" id="SSF141000">
    <property type="entry name" value="Glu-tRNAGln amidotransferase C subunit"/>
    <property type="match status" value="1"/>
</dbReference>
<sequence length="94" mass="10653">MKISREEVEHVAFLARLELTEEELVTNTEQLNSILDYAAMLEKLNTDDIKPTAHAVPLHNVLREDQVKPSMAREKVLANAPDAQDGFFKVPRIV</sequence>
<name>GATC_DESHY</name>
<gene>
    <name evidence="1" type="primary">gatC</name>
    <name type="ordered locus">DSY3887</name>
</gene>
<comment type="function">
    <text evidence="1">Allows the formation of correctly charged Asn-tRNA(Asn) or Gln-tRNA(Gln) through the transamidation of misacylated Asp-tRNA(Asn) or Glu-tRNA(Gln) in organisms which lack either or both of asparaginyl-tRNA or glutaminyl-tRNA synthetases. The reaction takes place in the presence of glutamine and ATP through an activated phospho-Asp-tRNA(Asn) or phospho-Glu-tRNA(Gln).</text>
</comment>
<comment type="catalytic activity">
    <reaction evidence="1">
        <text>L-glutamyl-tRNA(Gln) + L-glutamine + ATP + H2O = L-glutaminyl-tRNA(Gln) + L-glutamate + ADP + phosphate + H(+)</text>
        <dbReference type="Rhea" id="RHEA:17521"/>
        <dbReference type="Rhea" id="RHEA-COMP:9681"/>
        <dbReference type="Rhea" id="RHEA-COMP:9684"/>
        <dbReference type="ChEBI" id="CHEBI:15377"/>
        <dbReference type="ChEBI" id="CHEBI:15378"/>
        <dbReference type="ChEBI" id="CHEBI:29985"/>
        <dbReference type="ChEBI" id="CHEBI:30616"/>
        <dbReference type="ChEBI" id="CHEBI:43474"/>
        <dbReference type="ChEBI" id="CHEBI:58359"/>
        <dbReference type="ChEBI" id="CHEBI:78520"/>
        <dbReference type="ChEBI" id="CHEBI:78521"/>
        <dbReference type="ChEBI" id="CHEBI:456216"/>
    </reaction>
</comment>
<comment type="catalytic activity">
    <reaction evidence="1">
        <text>L-aspartyl-tRNA(Asn) + L-glutamine + ATP + H2O = L-asparaginyl-tRNA(Asn) + L-glutamate + ADP + phosphate + 2 H(+)</text>
        <dbReference type="Rhea" id="RHEA:14513"/>
        <dbReference type="Rhea" id="RHEA-COMP:9674"/>
        <dbReference type="Rhea" id="RHEA-COMP:9677"/>
        <dbReference type="ChEBI" id="CHEBI:15377"/>
        <dbReference type="ChEBI" id="CHEBI:15378"/>
        <dbReference type="ChEBI" id="CHEBI:29985"/>
        <dbReference type="ChEBI" id="CHEBI:30616"/>
        <dbReference type="ChEBI" id="CHEBI:43474"/>
        <dbReference type="ChEBI" id="CHEBI:58359"/>
        <dbReference type="ChEBI" id="CHEBI:78515"/>
        <dbReference type="ChEBI" id="CHEBI:78516"/>
        <dbReference type="ChEBI" id="CHEBI:456216"/>
    </reaction>
</comment>
<comment type="subunit">
    <text evidence="1">Heterotrimer of A, B and C subunits.</text>
</comment>
<comment type="similarity">
    <text evidence="1">Belongs to the GatC family.</text>
</comment>
<feature type="chain" id="PRO_1000016117" description="Aspartyl/glutamyl-tRNA(Asn/Gln) amidotransferase subunit C">
    <location>
        <begin position="1"/>
        <end position="94"/>
    </location>
</feature>
<evidence type="ECO:0000255" key="1">
    <source>
        <dbReference type="HAMAP-Rule" id="MF_00122"/>
    </source>
</evidence>